<evidence type="ECO:0000255" key="1">
    <source>
        <dbReference type="HAMAP-Rule" id="MF_00071"/>
    </source>
</evidence>
<gene>
    <name evidence="1" type="primary">lepA</name>
    <name type="ordered locus">SAOUHSC_01688</name>
</gene>
<accession>Q2FXY7</accession>
<comment type="function">
    <text evidence="1">Required for accurate and efficient protein synthesis under certain stress conditions. May act as a fidelity factor of the translation reaction, by catalyzing a one-codon backward translocation of tRNAs on improperly translocated ribosomes. Back-translocation proceeds from a post-translocation (POST) complex to a pre-translocation (PRE) complex, thus giving elongation factor G a second chance to translocate the tRNAs correctly. Binds to ribosomes in a GTP-dependent manner.</text>
</comment>
<comment type="catalytic activity">
    <reaction evidence="1">
        <text>GTP + H2O = GDP + phosphate + H(+)</text>
        <dbReference type="Rhea" id="RHEA:19669"/>
        <dbReference type="ChEBI" id="CHEBI:15377"/>
        <dbReference type="ChEBI" id="CHEBI:15378"/>
        <dbReference type="ChEBI" id="CHEBI:37565"/>
        <dbReference type="ChEBI" id="CHEBI:43474"/>
        <dbReference type="ChEBI" id="CHEBI:58189"/>
        <dbReference type="EC" id="3.6.5.n1"/>
    </reaction>
</comment>
<comment type="subcellular location">
    <subcellularLocation>
        <location evidence="1">Cell membrane</location>
        <topology evidence="1">Peripheral membrane protein</topology>
        <orientation evidence="1">Cytoplasmic side</orientation>
    </subcellularLocation>
</comment>
<comment type="similarity">
    <text evidence="1">Belongs to the TRAFAC class translation factor GTPase superfamily. Classic translation factor GTPase family. LepA subfamily.</text>
</comment>
<reference key="1">
    <citation type="book" date="2006" name="Gram positive pathogens, 2nd edition">
        <title>The Staphylococcus aureus NCTC 8325 genome.</title>
        <editorList>
            <person name="Fischetti V."/>
            <person name="Novick R."/>
            <person name="Ferretti J."/>
            <person name="Portnoy D."/>
            <person name="Rood J."/>
        </editorList>
        <authorList>
            <person name="Gillaspy A.F."/>
            <person name="Worrell V."/>
            <person name="Orvis J."/>
            <person name="Roe B.A."/>
            <person name="Dyer D.W."/>
            <person name="Iandolo J.J."/>
        </authorList>
    </citation>
    <scope>NUCLEOTIDE SEQUENCE [LARGE SCALE GENOMIC DNA]</scope>
    <source>
        <strain>NCTC 8325 / PS 47</strain>
    </source>
</reference>
<reference key="2">
    <citation type="journal article" date="2003" name="J. Biol. Chem.">
        <title>Cross-linking in the living cell locates the site of action of oxazolidinone antibiotics.</title>
        <authorList>
            <person name="Colca J.R."/>
            <person name="McDonald W.G."/>
            <person name="Waldon D.J."/>
            <person name="Thomasco L.M."/>
            <person name="Gadwood R.C."/>
            <person name="Lund E.T."/>
            <person name="Cavey G.S."/>
            <person name="Mathews W.R."/>
            <person name="Adams L.D."/>
            <person name="Cecil E.T."/>
            <person name="Pearson J.D."/>
            <person name="Bock J.H."/>
            <person name="Mott J.E."/>
            <person name="Shinabarger D.L."/>
            <person name="Xiong L."/>
            <person name="Mankin A.S."/>
        </authorList>
    </citation>
    <scope>RIBOSOME-BINDING</scope>
</reference>
<keyword id="KW-1003">Cell membrane</keyword>
<keyword id="KW-0342">GTP-binding</keyword>
<keyword id="KW-0378">Hydrolase</keyword>
<keyword id="KW-0472">Membrane</keyword>
<keyword id="KW-0547">Nucleotide-binding</keyword>
<keyword id="KW-0648">Protein biosynthesis</keyword>
<keyword id="KW-1185">Reference proteome</keyword>
<sequence length="607" mass="68175">MDNEQRLKRRENIRNFSIIAHIDHGKSTLADRILENTKSVETRDMQDQLLDSMDLERERGITIKLNAVRLKYEAKDGNTYTFHLIDTPGHVDFTYEVSRSLAACEGAILVVDAAQGIEAQTLANVYLALDNELELLPVINKIDLPAAEPERVKQEIEDMIGLDQDDVVLASAKSNIGIEEILEKIVEVVPAPDGDPEAPLKALIFDSEYDPYRGVISSIRIVDGVVKAGDKIRMMATGKEFEVTEVGINTPKQLPVDELTVGDVGYIIASIKNVDDSRVGDTITLASRPASEPLQGYKKMNPMVYCGLFPIDNKNYNDLREALEKLQLNDASLEFEPESSQALGFGYRTGFLGMLHMEIIQERIEREFGIELIATAPSVIYQCVLRDGSEVTVDNPAQMPDRDKIDKIFEPYVRATMMVPNDYVGAVMELCQRKRGQFINMDYLDDIRVNIVYELPLAEVVFDFFDQLKSNTKGYASFDYEFIENKESNLVKMDILLNGDKVDALSFIVHRDFAYERGKALVEKLKTLIPRQQFEVPVQAAIGQKIVARTNIKSMGKNVLAKCYGGDISRKRKLLEKQKAGKAKMKAVGNVEIPQDAFLAVLKMDDE</sequence>
<feature type="chain" id="PRO_0000265708" description="Elongation factor 4">
    <location>
        <begin position="1"/>
        <end position="607"/>
    </location>
</feature>
<feature type="domain" description="tr-type G">
    <location>
        <begin position="11"/>
        <end position="193"/>
    </location>
</feature>
<feature type="binding site" evidence="1">
    <location>
        <begin position="23"/>
        <end position="28"/>
    </location>
    <ligand>
        <name>GTP</name>
        <dbReference type="ChEBI" id="CHEBI:37565"/>
    </ligand>
</feature>
<feature type="binding site" evidence="1">
    <location>
        <begin position="140"/>
        <end position="143"/>
    </location>
    <ligand>
        <name>GTP</name>
        <dbReference type="ChEBI" id="CHEBI:37565"/>
    </ligand>
</feature>
<protein>
    <recommendedName>
        <fullName evidence="1">Elongation factor 4</fullName>
        <shortName evidence="1">EF-4</shortName>
        <ecNumber evidence="1">3.6.5.n1</ecNumber>
    </recommendedName>
    <alternativeName>
        <fullName evidence="1">Ribosomal back-translocase LepA</fullName>
    </alternativeName>
</protein>
<organism>
    <name type="scientific">Staphylococcus aureus (strain NCTC 8325 / PS 47)</name>
    <dbReference type="NCBI Taxonomy" id="93061"/>
    <lineage>
        <taxon>Bacteria</taxon>
        <taxon>Bacillati</taxon>
        <taxon>Bacillota</taxon>
        <taxon>Bacilli</taxon>
        <taxon>Bacillales</taxon>
        <taxon>Staphylococcaceae</taxon>
        <taxon>Staphylococcus</taxon>
    </lineage>
</organism>
<dbReference type="EC" id="3.6.5.n1" evidence="1"/>
<dbReference type="EMBL" id="CP000253">
    <property type="protein sequence ID" value="ABD30762.1"/>
    <property type="molecule type" value="Genomic_DNA"/>
</dbReference>
<dbReference type="RefSeq" id="WP_000368341.1">
    <property type="nucleotide sequence ID" value="NZ_LS483365.1"/>
</dbReference>
<dbReference type="RefSeq" id="YP_500198.1">
    <property type="nucleotide sequence ID" value="NC_007795.1"/>
</dbReference>
<dbReference type="SMR" id="Q2FXY7"/>
<dbReference type="STRING" id="93061.SAOUHSC_01688"/>
<dbReference type="PaxDb" id="1280-SAXN108_1610"/>
<dbReference type="GeneID" id="3921800"/>
<dbReference type="KEGG" id="sao:SAOUHSC_01688"/>
<dbReference type="PATRIC" id="fig|93061.5.peg.1537"/>
<dbReference type="eggNOG" id="COG0481">
    <property type="taxonomic scope" value="Bacteria"/>
</dbReference>
<dbReference type="HOGENOM" id="CLU_009995_3_3_9"/>
<dbReference type="OrthoDB" id="9804431at2"/>
<dbReference type="PRO" id="PR:Q2FXY7"/>
<dbReference type="Proteomes" id="UP000008816">
    <property type="component" value="Chromosome"/>
</dbReference>
<dbReference type="GO" id="GO:0005886">
    <property type="term" value="C:plasma membrane"/>
    <property type="evidence" value="ECO:0007669"/>
    <property type="project" value="UniProtKB-SubCell"/>
</dbReference>
<dbReference type="GO" id="GO:0005525">
    <property type="term" value="F:GTP binding"/>
    <property type="evidence" value="ECO:0007669"/>
    <property type="project" value="UniProtKB-UniRule"/>
</dbReference>
<dbReference type="GO" id="GO:0003924">
    <property type="term" value="F:GTPase activity"/>
    <property type="evidence" value="ECO:0007669"/>
    <property type="project" value="UniProtKB-UniRule"/>
</dbReference>
<dbReference type="GO" id="GO:0043022">
    <property type="term" value="F:ribosome binding"/>
    <property type="evidence" value="ECO:0000318"/>
    <property type="project" value="GO_Central"/>
</dbReference>
<dbReference type="GO" id="GO:0003746">
    <property type="term" value="F:translation elongation factor activity"/>
    <property type="evidence" value="ECO:0007669"/>
    <property type="project" value="UniProtKB-UniRule"/>
</dbReference>
<dbReference type="GO" id="GO:0045727">
    <property type="term" value="P:positive regulation of translation"/>
    <property type="evidence" value="ECO:0000318"/>
    <property type="project" value="GO_Central"/>
</dbReference>
<dbReference type="CDD" id="cd03699">
    <property type="entry name" value="EF4_II"/>
    <property type="match status" value="1"/>
</dbReference>
<dbReference type="CDD" id="cd16260">
    <property type="entry name" value="EF4_III"/>
    <property type="match status" value="1"/>
</dbReference>
<dbReference type="CDD" id="cd01890">
    <property type="entry name" value="LepA"/>
    <property type="match status" value="1"/>
</dbReference>
<dbReference type="CDD" id="cd03709">
    <property type="entry name" value="lepA_C"/>
    <property type="match status" value="1"/>
</dbReference>
<dbReference type="FunFam" id="3.40.50.300:FF:000078">
    <property type="entry name" value="Elongation factor 4"/>
    <property type="match status" value="1"/>
</dbReference>
<dbReference type="FunFam" id="2.40.30.10:FF:000015">
    <property type="entry name" value="Translation factor GUF1, mitochondrial"/>
    <property type="match status" value="1"/>
</dbReference>
<dbReference type="FunFam" id="3.30.70.240:FF:000007">
    <property type="entry name" value="Translation factor GUF1, mitochondrial"/>
    <property type="match status" value="1"/>
</dbReference>
<dbReference type="FunFam" id="3.30.70.2570:FF:000001">
    <property type="entry name" value="Translation factor GUF1, mitochondrial"/>
    <property type="match status" value="1"/>
</dbReference>
<dbReference type="FunFam" id="3.30.70.870:FF:000004">
    <property type="entry name" value="Translation factor GUF1, mitochondrial"/>
    <property type="match status" value="1"/>
</dbReference>
<dbReference type="Gene3D" id="3.30.70.240">
    <property type="match status" value="1"/>
</dbReference>
<dbReference type="Gene3D" id="3.30.70.2570">
    <property type="entry name" value="Elongation factor 4, C-terminal domain"/>
    <property type="match status" value="1"/>
</dbReference>
<dbReference type="Gene3D" id="3.30.70.870">
    <property type="entry name" value="Elongation Factor G (Translational Gtpase), domain 3"/>
    <property type="match status" value="1"/>
</dbReference>
<dbReference type="Gene3D" id="3.40.50.300">
    <property type="entry name" value="P-loop containing nucleotide triphosphate hydrolases"/>
    <property type="match status" value="1"/>
</dbReference>
<dbReference type="Gene3D" id="2.40.30.10">
    <property type="entry name" value="Translation factors"/>
    <property type="match status" value="1"/>
</dbReference>
<dbReference type="HAMAP" id="MF_00071">
    <property type="entry name" value="LepA"/>
    <property type="match status" value="1"/>
</dbReference>
<dbReference type="InterPro" id="IPR006297">
    <property type="entry name" value="EF-4"/>
</dbReference>
<dbReference type="InterPro" id="IPR035647">
    <property type="entry name" value="EFG_III/V"/>
</dbReference>
<dbReference type="InterPro" id="IPR000640">
    <property type="entry name" value="EFG_V-like"/>
</dbReference>
<dbReference type="InterPro" id="IPR004161">
    <property type="entry name" value="EFTu-like_2"/>
</dbReference>
<dbReference type="InterPro" id="IPR031157">
    <property type="entry name" value="G_TR_CS"/>
</dbReference>
<dbReference type="InterPro" id="IPR038363">
    <property type="entry name" value="LepA_C_sf"/>
</dbReference>
<dbReference type="InterPro" id="IPR013842">
    <property type="entry name" value="LepA_CTD"/>
</dbReference>
<dbReference type="InterPro" id="IPR035654">
    <property type="entry name" value="LepA_IV"/>
</dbReference>
<dbReference type="InterPro" id="IPR027417">
    <property type="entry name" value="P-loop_NTPase"/>
</dbReference>
<dbReference type="InterPro" id="IPR005225">
    <property type="entry name" value="Small_GTP-bd"/>
</dbReference>
<dbReference type="InterPro" id="IPR000795">
    <property type="entry name" value="T_Tr_GTP-bd_dom"/>
</dbReference>
<dbReference type="InterPro" id="IPR009000">
    <property type="entry name" value="Transl_B-barrel_sf"/>
</dbReference>
<dbReference type="NCBIfam" id="TIGR01393">
    <property type="entry name" value="lepA"/>
    <property type="match status" value="1"/>
</dbReference>
<dbReference type="NCBIfam" id="TIGR00231">
    <property type="entry name" value="small_GTP"/>
    <property type="match status" value="1"/>
</dbReference>
<dbReference type="PANTHER" id="PTHR43512:SF4">
    <property type="entry name" value="TRANSLATION FACTOR GUF1 HOMOLOG, CHLOROPLASTIC"/>
    <property type="match status" value="1"/>
</dbReference>
<dbReference type="PANTHER" id="PTHR43512">
    <property type="entry name" value="TRANSLATION FACTOR GUF1-RELATED"/>
    <property type="match status" value="1"/>
</dbReference>
<dbReference type="Pfam" id="PF00679">
    <property type="entry name" value="EFG_C"/>
    <property type="match status" value="1"/>
</dbReference>
<dbReference type="Pfam" id="PF00009">
    <property type="entry name" value="GTP_EFTU"/>
    <property type="match status" value="1"/>
</dbReference>
<dbReference type="Pfam" id="PF03144">
    <property type="entry name" value="GTP_EFTU_D2"/>
    <property type="match status" value="1"/>
</dbReference>
<dbReference type="Pfam" id="PF06421">
    <property type="entry name" value="LepA_C"/>
    <property type="match status" value="1"/>
</dbReference>
<dbReference type="PRINTS" id="PR00315">
    <property type="entry name" value="ELONGATNFCT"/>
</dbReference>
<dbReference type="SMART" id="SM00838">
    <property type="entry name" value="EFG_C"/>
    <property type="match status" value="1"/>
</dbReference>
<dbReference type="SUPFAM" id="SSF54980">
    <property type="entry name" value="EF-G C-terminal domain-like"/>
    <property type="match status" value="2"/>
</dbReference>
<dbReference type="SUPFAM" id="SSF52540">
    <property type="entry name" value="P-loop containing nucleoside triphosphate hydrolases"/>
    <property type="match status" value="1"/>
</dbReference>
<dbReference type="SUPFAM" id="SSF50447">
    <property type="entry name" value="Translation proteins"/>
    <property type="match status" value="1"/>
</dbReference>
<dbReference type="PROSITE" id="PS00301">
    <property type="entry name" value="G_TR_1"/>
    <property type="match status" value="1"/>
</dbReference>
<dbReference type="PROSITE" id="PS51722">
    <property type="entry name" value="G_TR_2"/>
    <property type="match status" value="1"/>
</dbReference>
<name>LEPA_STAA8</name>
<proteinExistence type="evidence at protein level"/>